<feature type="chain" id="PRO_0000369793" description="Ribosomal RNA small subunit methyltransferase C">
    <location>
        <begin position="1"/>
        <end position="339"/>
    </location>
</feature>
<organism>
    <name type="scientific">Aliivibrio fischeri (strain ATCC 700601 / ES114)</name>
    <name type="common">Vibrio fischeri</name>
    <dbReference type="NCBI Taxonomy" id="312309"/>
    <lineage>
        <taxon>Bacteria</taxon>
        <taxon>Pseudomonadati</taxon>
        <taxon>Pseudomonadota</taxon>
        <taxon>Gammaproteobacteria</taxon>
        <taxon>Vibrionales</taxon>
        <taxon>Vibrionaceae</taxon>
        <taxon>Aliivibrio</taxon>
    </lineage>
</organism>
<dbReference type="EC" id="2.1.1.172" evidence="1"/>
<dbReference type="EMBL" id="CP000020">
    <property type="protein sequence ID" value="AAW86632.1"/>
    <property type="molecule type" value="Genomic_DNA"/>
</dbReference>
<dbReference type="RefSeq" id="WP_011262584.1">
    <property type="nucleotide sequence ID" value="NC_006840.2"/>
</dbReference>
<dbReference type="RefSeq" id="YP_205520.1">
    <property type="nucleotide sequence ID" value="NC_006840.2"/>
</dbReference>
<dbReference type="SMR" id="Q5E2W4"/>
<dbReference type="STRING" id="312309.VF_2137"/>
<dbReference type="EnsemblBacteria" id="AAW86632">
    <property type="protein sequence ID" value="AAW86632"/>
    <property type="gene ID" value="VF_2137"/>
</dbReference>
<dbReference type="GeneID" id="54164847"/>
<dbReference type="KEGG" id="vfi:VF_2137"/>
<dbReference type="PATRIC" id="fig|312309.11.peg.2179"/>
<dbReference type="eggNOG" id="COG2813">
    <property type="taxonomic scope" value="Bacteria"/>
</dbReference>
<dbReference type="HOGENOM" id="CLU_049581_0_1_6"/>
<dbReference type="OrthoDB" id="9816072at2"/>
<dbReference type="Proteomes" id="UP000000537">
    <property type="component" value="Chromosome I"/>
</dbReference>
<dbReference type="GO" id="GO:0005737">
    <property type="term" value="C:cytoplasm"/>
    <property type="evidence" value="ECO:0007669"/>
    <property type="project" value="UniProtKB-SubCell"/>
</dbReference>
<dbReference type="GO" id="GO:0052914">
    <property type="term" value="F:16S rRNA (guanine(1207)-N(2))-methyltransferase activity"/>
    <property type="evidence" value="ECO:0007669"/>
    <property type="project" value="UniProtKB-EC"/>
</dbReference>
<dbReference type="GO" id="GO:0003676">
    <property type="term" value="F:nucleic acid binding"/>
    <property type="evidence" value="ECO:0007669"/>
    <property type="project" value="InterPro"/>
</dbReference>
<dbReference type="CDD" id="cd02440">
    <property type="entry name" value="AdoMet_MTases"/>
    <property type="match status" value="1"/>
</dbReference>
<dbReference type="Gene3D" id="3.40.50.150">
    <property type="entry name" value="Vaccinia Virus protein VP39"/>
    <property type="match status" value="2"/>
</dbReference>
<dbReference type="HAMAP" id="MF_01862">
    <property type="entry name" value="16SrRNA_methyltr_C"/>
    <property type="match status" value="1"/>
</dbReference>
<dbReference type="InterPro" id="IPR002052">
    <property type="entry name" value="DNA_methylase_N6_adenine_CS"/>
</dbReference>
<dbReference type="InterPro" id="IPR013675">
    <property type="entry name" value="Mtase_sm_N"/>
</dbReference>
<dbReference type="InterPro" id="IPR023543">
    <property type="entry name" value="rRNA_ssu_MeTfrase_C"/>
</dbReference>
<dbReference type="InterPro" id="IPR046977">
    <property type="entry name" value="RsmC/RlmG"/>
</dbReference>
<dbReference type="InterPro" id="IPR029063">
    <property type="entry name" value="SAM-dependent_MTases_sf"/>
</dbReference>
<dbReference type="InterPro" id="IPR007848">
    <property type="entry name" value="Small_mtfrase_dom"/>
</dbReference>
<dbReference type="NCBIfam" id="NF007023">
    <property type="entry name" value="PRK09489.1"/>
    <property type="match status" value="1"/>
</dbReference>
<dbReference type="PANTHER" id="PTHR47816">
    <property type="entry name" value="RIBOSOMAL RNA SMALL SUBUNIT METHYLTRANSFERASE C"/>
    <property type="match status" value="1"/>
</dbReference>
<dbReference type="PANTHER" id="PTHR47816:SF4">
    <property type="entry name" value="RIBOSOMAL RNA SMALL SUBUNIT METHYLTRANSFERASE C"/>
    <property type="match status" value="1"/>
</dbReference>
<dbReference type="Pfam" id="PF05175">
    <property type="entry name" value="MTS"/>
    <property type="match status" value="1"/>
</dbReference>
<dbReference type="Pfam" id="PF08468">
    <property type="entry name" value="MTS_N"/>
    <property type="match status" value="1"/>
</dbReference>
<dbReference type="SUPFAM" id="SSF53335">
    <property type="entry name" value="S-adenosyl-L-methionine-dependent methyltransferases"/>
    <property type="match status" value="1"/>
</dbReference>
<keyword id="KW-0963">Cytoplasm</keyword>
<keyword id="KW-0489">Methyltransferase</keyword>
<keyword id="KW-1185">Reference proteome</keyword>
<keyword id="KW-0698">rRNA processing</keyword>
<keyword id="KW-0949">S-adenosyl-L-methionine</keyword>
<keyword id="KW-0808">Transferase</keyword>
<gene>
    <name evidence="1" type="primary">rsmC</name>
    <name type="ordered locus">VF_2137</name>
</gene>
<protein>
    <recommendedName>
        <fullName evidence="1">Ribosomal RNA small subunit methyltransferase C</fullName>
        <ecNumber evidence="1">2.1.1.172</ecNumber>
    </recommendedName>
    <alternativeName>
        <fullName evidence="1">16S rRNA m2G1207 methyltransferase</fullName>
    </alternativeName>
    <alternativeName>
        <fullName evidence="1">rRNA (guanine-N(2)-)-methyltransferase RsmC</fullName>
    </alternativeName>
</protein>
<proteinExistence type="inferred from homology"/>
<name>RSMC_ALIF1</name>
<reference key="1">
    <citation type="journal article" date="2005" name="Proc. Natl. Acad. Sci. U.S.A.">
        <title>Complete genome sequence of Vibrio fischeri: a symbiotic bacterium with pathogenic congeners.</title>
        <authorList>
            <person name="Ruby E.G."/>
            <person name="Urbanowski M."/>
            <person name="Campbell J."/>
            <person name="Dunn A."/>
            <person name="Faini M."/>
            <person name="Gunsalus R."/>
            <person name="Lostroh P."/>
            <person name="Lupp C."/>
            <person name="McCann J."/>
            <person name="Millikan D."/>
            <person name="Schaefer A."/>
            <person name="Stabb E."/>
            <person name="Stevens A."/>
            <person name="Visick K."/>
            <person name="Whistler C."/>
            <person name="Greenberg E.P."/>
        </authorList>
    </citation>
    <scope>NUCLEOTIDE SEQUENCE [LARGE SCALE GENOMIC DNA]</scope>
    <source>
        <strain>ATCC 700601 / ES114</strain>
    </source>
</reference>
<accession>Q5E2W4</accession>
<evidence type="ECO:0000255" key="1">
    <source>
        <dbReference type="HAMAP-Rule" id="MF_01862"/>
    </source>
</evidence>
<comment type="function">
    <text evidence="1">Specifically methylates the guanine in position 1207 of 16S rRNA in the 30S particle.</text>
</comment>
<comment type="catalytic activity">
    <reaction evidence="1">
        <text>guanosine(1207) in 16S rRNA + S-adenosyl-L-methionine = N(2)-methylguanosine(1207) in 16S rRNA + S-adenosyl-L-homocysteine + H(+)</text>
        <dbReference type="Rhea" id="RHEA:42736"/>
        <dbReference type="Rhea" id="RHEA-COMP:10213"/>
        <dbReference type="Rhea" id="RHEA-COMP:10214"/>
        <dbReference type="ChEBI" id="CHEBI:15378"/>
        <dbReference type="ChEBI" id="CHEBI:57856"/>
        <dbReference type="ChEBI" id="CHEBI:59789"/>
        <dbReference type="ChEBI" id="CHEBI:74269"/>
        <dbReference type="ChEBI" id="CHEBI:74481"/>
        <dbReference type="EC" id="2.1.1.172"/>
    </reaction>
</comment>
<comment type="subunit">
    <text evidence="1">Monomer.</text>
</comment>
<comment type="subcellular location">
    <subcellularLocation>
        <location evidence="1">Cytoplasm</location>
    </subcellularLocation>
</comment>
<comment type="similarity">
    <text evidence="1">Belongs to the methyltransferase superfamily. RsmC family.</text>
</comment>
<sequence>MSYSAPSQITQRQLAYFEGKHVLIAGELIDDFPFELAKHCESTSIFTTNYSYYKQFAGHNSIQCYFGSELTEPTNVDMILLYWPKAKAEAEYLLTMLLAKLGKNTEIVVVGENRSGVKSIEKMFADFGPINKFDSARRCSFYWGQCTEEAPTFNQQDWFKEYQVEFENHTIEVRSLPGVFSHGEFDKGSELLLQTLPALRGHVLDFGCGAGVIGSVMKTINPKIHLDMVDISALAIASSIETLKANNLEGNVFASDVYSDTKENYQFIVSNPPFHAGLKTHYSSTEELLEKAPQNLTHEGQLILVANSFLQYPPIIEKAFGECLTLAKNNKFKIYSAQK</sequence>